<keyword id="KW-1185">Reference proteome</keyword>
<sequence length="104" mass="11923">MAIIPDKQDSSVLERKEQKLKPPSMYKVVLLNDDFTPMEFVVMVVQEYFKKDRETATQIMLKVHREGRGVCGVYTRDIASTKVEQVVTHARQAGHPLQCVMEEA</sequence>
<name>CLPS_BURPS</name>
<comment type="function">
    <text evidence="1">Involved in the modulation of the specificity of the ClpAP-mediated ATP-dependent protein degradation.</text>
</comment>
<comment type="subunit">
    <text evidence="1">Binds to the N-terminal domain of the chaperone ClpA.</text>
</comment>
<comment type="similarity">
    <text evidence="1">Belongs to the ClpS family.</text>
</comment>
<accession>Q63WJ1</accession>
<organism>
    <name type="scientific">Burkholderia pseudomallei (strain K96243)</name>
    <dbReference type="NCBI Taxonomy" id="272560"/>
    <lineage>
        <taxon>Bacteria</taxon>
        <taxon>Pseudomonadati</taxon>
        <taxon>Pseudomonadota</taxon>
        <taxon>Betaproteobacteria</taxon>
        <taxon>Burkholderiales</taxon>
        <taxon>Burkholderiaceae</taxon>
        <taxon>Burkholderia</taxon>
        <taxon>pseudomallei group</taxon>
    </lineage>
</organism>
<feature type="chain" id="PRO_0000215695" description="ATP-dependent Clp protease adapter protein ClpS">
    <location>
        <begin position="1"/>
        <end position="104"/>
    </location>
</feature>
<evidence type="ECO:0000255" key="1">
    <source>
        <dbReference type="HAMAP-Rule" id="MF_00302"/>
    </source>
</evidence>
<protein>
    <recommendedName>
        <fullName evidence="1">ATP-dependent Clp protease adapter protein ClpS</fullName>
    </recommendedName>
</protein>
<reference key="1">
    <citation type="journal article" date="2004" name="Proc. Natl. Acad. Sci. U.S.A.">
        <title>Genomic plasticity of the causative agent of melioidosis, Burkholderia pseudomallei.</title>
        <authorList>
            <person name="Holden M.T.G."/>
            <person name="Titball R.W."/>
            <person name="Peacock S.J."/>
            <person name="Cerdeno-Tarraga A.-M."/>
            <person name="Atkins T."/>
            <person name="Crossman L.C."/>
            <person name="Pitt T."/>
            <person name="Churcher C."/>
            <person name="Mungall K.L."/>
            <person name="Bentley S.D."/>
            <person name="Sebaihia M."/>
            <person name="Thomson N.R."/>
            <person name="Bason N."/>
            <person name="Beacham I.R."/>
            <person name="Brooks K."/>
            <person name="Brown K.A."/>
            <person name="Brown N.F."/>
            <person name="Challis G.L."/>
            <person name="Cherevach I."/>
            <person name="Chillingworth T."/>
            <person name="Cronin A."/>
            <person name="Crossett B."/>
            <person name="Davis P."/>
            <person name="DeShazer D."/>
            <person name="Feltwell T."/>
            <person name="Fraser A."/>
            <person name="Hance Z."/>
            <person name="Hauser H."/>
            <person name="Holroyd S."/>
            <person name="Jagels K."/>
            <person name="Keith K.E."/>
            <person name="Maddison M."/>
            <person name="Moule S."/>
            <person name="Price C."/>
            <person name="Quail M.A."/>
            <person name="Rabbinowitsch E."/>
            <person name="Rutherford K."/>
            <person name="Sanders M."/>
            <person name="Simmonds M."/>
            <person name="Songsivilai S."/>
            <person name="Stevens K."/>
            <person name="Tumapa S."/>
            <person name="Vesaratchavest M."/>
            <person name="Whitehead S."/>
            <person name="Yeats C."/>
            <person name="Barrell B.G."/>
            <person name="Oyston P.C.F."/>
            <person name="Parkhill J."/>
        </authorList>
    </citation>
    <scope>NUCLEOTIDE SEQUENCE [LARGE SCALE GENOMIC DNA]</scope>
    <source>
        <strain>K96243</strain>
    </source>
</reference>
<gene>
    <name evidence="1" type="primary">clpS</name>
    <name type="ordered locus">BPSL0898.1</name>
    <name type="ORF">BPSL0898a</name>
</gene>
<dbReference type="EMBL" id="BX571965">
    <property type="protein sequence ID" value="CAH34892.1"/>
    <property type="molecule type" value="Genomic_DNA"/>
</dbReference>
<dbReference type="RefSeq" id="WP_004194131.1">
    <property type="nucleotide sequence ID" value="NZ_CP009538.1"/>
</dbReference>
<dbReference type="RefSeq" id="YP_107525.1">
    <property type="nucleotide sequence ID" value="NC_006350.1"/>
</dbReference>
<dbReference type="SMR" id="Q63WJ1"/>
<dbReference type="STRING" id="272560.BPSL0898a"/>
<dbReference type="GeneID" id="93059411"/>
<dbReference type="KEGG" id="bps:BPSL0898a"/>
<dbReference type="PATRIC" id="fig|272560.51.peg.684"/>
<dbReference type="eggNOG" id="COG2127">
    <property type="taxonomic scope" value="Bacteria"/>
</dbReference>
<dbReference type="Proteomes" id="UP000000605">
    <property type="component" value="Chromosome 1"/>
</dbReference>
<dbReference type="GO" id="GO:0030163">
    <property type="term" value="P:protein catabolic process"/>
    <property type="evidence" value="ECO:0007669"/>
    <property type="project" value="InterPro"/>
</dbReference>
<dbReference type="GO" id="GO:0006508">
    <property type="term" value="P:proteolysis"/>
    <property type="evidence" value="ECO:0007669"/>
    <property type="project" value="UniProtKB-UniRule"/>
</dbReference>
<dbReference type="FunFam" id="3.30.1390.10:FF:000002">
    <property type="entry name" value="ATP-dependent Clp protease adapter protein ClpS"/>
    <property type="match status" value="1"/>
</dbReference>
<dbReference type="Gene3D" id="3.30.1390.10">
    <property type="match status" value="1"/>
</dbReference>
<dbReference type="HAMAP" id="MF_00302">
    <property type="entry name" value="ClpS"/>
    <property type="match status" value="1"/>
</dbReference>
<dbReference type="InterPro" id="IPR022935">
    <property type="entry name" value="ClpS"/>
</dbReference>
<dbReference type="InterPro" id="IPR003769">
    <property type="entry name" value="ClpS_core"/>
</dbReference>
<dbReference type="InterPro" id="IPR014719">
    <property type="entry name" value="Ribosomal_bL12_C/ClpS-like"/>
</dbReference>
<dbReference type="NCBIfam" id="NF000672">
    <property type="entry name" value="PRK00033.1-5"/>
    <property type="match status" value="1"/>
</dbReference>
<dbReference type="PANTHER" id="PTHR33473:SF19">
    <property type="entry name" value="ATP-DEPENDENT CLP PROTEASE ADAPTER PROTEIN CLPS"/>
    <property type="match status" value="1"/>
</dbReference>
<dbReference type="PANTHER" id="PTHR33473">
    <property type="entry name" value="ATP-DEPENDENT CLP PROTEASE ADAPTER PROTEIN CLPS1, CHLOROPLASTIC"/>
    <property type="match status" value="1"/>
</dbReference>
<dbReference type="Pfam" id="PF02617">
    <property type="entry name" value="ClpS"/>
    <property type="match status" value="1"/>
</dbReference>
<dbReference type="SUPFAM" id="SSF54736">
    <property type="entry name" value="ClpS-like"/>
    <property type="match status" value="1"/>
</dbReference>
<proteinExistence type="inferred from homology"/>